<name>CDK10_DICDI</name>
<organism>
    <name type="scientific">Dictyostelium discoideum</name>
    <name type="common">Social amoeba</name>
    <dbReference type="NCBI Taxonomy" id="44689"/>
    <lineage>
        <taxon>Eukaryota</taxon>
        <taxon>Amoebozoa</taxon>
        <taxon>Evosea</taxon>
        <taxon>Eumycetozoa</taxon>
        <taxon>Dictyostelia</taxon>
        <taxon>Dictyosteliales</taxon>
        <taxon>Dictyosteliaceae</taxon>
        <taxon>Dictyostelium</taxon>
    </lineage>
</organism>
<keyword id="KW-0067">ATP-binding</keyword>
<keyword id="KW-0418">Kinase</keyword>
<keyword id="KW-0547">Nucleotide-binding</keyword>
<keyword id="KW-1185">Reference proteome</keyword>
<keyword id="KW-0723">Serine/threonine-protein kinase</keyword>
<keyword id="KW-0808">Transferase</keyword>
<dbReference type="EC" id="2.7.11.22"/>
<dbReference type="EMBL" id="AAFI02000003">
    <property type="protein sequence ID" value="EAL73693.1"/>
    <property type="molecule type" value="Genomic_DNA"/>
</dbReference>
<dbReference type="RefSeq" id="XP_647110.1">
    <property type="nucleotide sequence ID" value="XM_642018.1"/>
</dbReference>
<dbReference type="SMR" id="Q55GS4"/>
<dbReference type="FunCoup" id="Q55GS4">
    <property type="interactions" value="145"/>
</dbReference>
<dbReference type="STRING" id="44689.Q55GS4"/>
<dbReference type="PaxDb" id="44689-DDB0229427"/>
<dbReference type="EnsemblProtists" id="EAL73693">
    <property type="protein sequence ID" value="EAL73693"/>
    <property type="gene ID" value="DDB_G0268480"/>
</dbReference>
<dbReference type="GeneID" id="8615914"/>
<dbReference type="KEGG" id="ddi:DDB_G0268480"/>
<dbReference type="dictyBase" id="DDB_G0268480">
    <property type="gene designation" value="cdk10"/>
</dbReference>
<dbReference type="VEuPathDB" id="AmoebaDB:DDB_G0268480"/>
<dbReference type="eggNOG" id="KOG0663">
    <property type="taxonomic scope" value="Eukaryota"/>
</dbReference>
<dbReference type="HOGENOM" id="CLU_000288_181_1_1"/>
<dbReference type="InParanoid" id="Q55GS4"/>
<dbReference type="OMA" id="TEPGHAM"/>
<dbReference type="PhylomeDB" id="Q55GS4"/>
<dbReference type="PRO" id="PR:Q55GS4"/>
<dbReference type="Proteomes" id="UP000002195">
    <property type="component" value="Chromosome 1"/>
</dbReference>
<dbReference type="GO" id="GO:0005634">
    <property type="term" value="C:nucleus"/>
    <property type="evidence" value="ECO:0000250"/>
    <property type="project" value="dictyBase"/>
</dbReference>
<dbReference type="GO" id="GO:0005524">
    <property type="term" value="F:ATP binding"/>
    <property type="evidence" value="ECO:0007669"/>
    <property type="project" value="UniProtKB-KW"/>
</dbReference>
<dbReference type="GO" id="GO:0004693">
    <property type="term" value="F:cyclin-dependent protein serine/threonine kinase activity"/>
    <property type="evidence" value="ECO:0007669"/>
    <property type="project" value="UniProtKB-EC"/>
</dbReference>
<dbReference type="GO" id="GO:0106310">
    <property type="term" value="F:protein serine kinase activity"/>
    <property type="evidence" value="ECO:0007669"/>
    <property type="project" value="RHEA"/>
</dbReference>
<dbReference type="GO" id="GO:0004674">
    <property type="term" value="F:protein serine/threonine kinase activity"/>
    <property type="evidence" value="ECO:0000250"/>
    <property type="project" value="dictyBase"/>
</dbReference>
<dbReference type="GO" id="GO:0006468">
    <property type="term" value="P:protein phosphorylation"/>
    <property type="evidence" value="ECO:0000250"/>
    <property type="project" value="dictyBase"/>
</dbReference>
<dbReference type="GO" id="GO:0051726">
    <property type="term" value="P:regulation of cell cycle"/>
    <property type="evidence" value="ECO:0000318"/>
    <property type="project" value="GO_Central"/>
</dbReference>
<dbReference type="FunFam" id="1.10.510.10:FF:000738">
    <property type="entry name" value="Cdc2-related protein kinase 1"/>
    <property type="match status" value="1"/>
</dbReference>
<dbReference type="FunFam" id="3.30.200.20:FF:000172">
    <property type="entry name" value="cyclin-dependent kinase G-2 isoform X1"/>
    <property type="match status" value="1"/>
</dbReference>
<dbReference type="Gene3D" id="3.30.200.20">
    <property type="entry name" value="Phosphorylase Kinase, domain 1"/>
    <property type="match status" value="1"/>
</dbReference>
<dbReference type="Gene3D" id="1.10.510.10">
    <property type="entry name" value="Transferase(Phosphotransferase) domain 1"/>
    <property type="match status" value="1"/>
</dbReference>
<dbReference type="InterPro" id="IPR050108">
    <property type="entry name" value="CDK"/>
</dbReference>
<dbReference type="InterPro" id="IPR011009">
    <property type="entry name" value="Kinase-like_dom_sf"/>
</dbReference>
<dbReference type="InterPro" id="IPR000719">
    <property type="entry name" value="Prot_kinase_dom"/>
</dbReference>
<dbReference type="InterPro" id="IPR017441">
    <property type="entry name" value="Protein_kinase_ATP_BS"/>
</dbReference>
<dbReference type="InterPro" id="IPR008271">
    <property type="entry name" value="Ser/Thr_kinase_AS"/>
</dbReference>
<dbReference type="PANTHER" id="PTHR24056">
    <property type="entry name" value="CELL DIVISION PROTEIN KINASE"/>
    <property type="match status" value="1"/>
</dbReference>
<dbReference type="PANTHER" id="PTHR24056:SF107">
    <property type="entry name" value="CYCLIN-DEPENDENT KINASE 11A-RELATED"/>
    <property type="match status" value="1"/>
</dbReference>
<dbReference type="Pfam" id="PF00069">
    <property type="entry name" value="Pkinase"/>
    <property type="match status" value="1"/>
</dbReference>
<dbReference type="SMART" id="SM00220">
    <property type="entry name" value="S_TKc"/>
    <property type="match status" value="1"/>
</dbReference>
<dbReference type="SUPFAM" id="SSF56112">
    <property type="entry name" value="Protein kinase-like (PK-like)"/>
    <property type="match status" value="1"/>
</dbReference>
<dbReference type="PROSITE" id="PS00107">
    <property type="entry name" value="PROTEIN_KINASE_ATP"/>
    <property type="match status" value="1"/>
</dbReference>
<dbReference type="PROSITE" id="PS50011">
    <property type="entry name" value="PROTEIN_KINASE_DOM"/>
    <property type="match status" value="1"/>
</dbReference>
<dbReference type="PROSITE" id="PS00108">
    <property type="entry name" value="PROTEIN_KINASE_ST"/>
    <property type="match status" value="1"/>
</dbReference>
<evidence type="ECO:0000255" key="1">
    <source>
        <dbReference type="PROSITE-ProRule" id="PRU00159"/>
    </source>
</evidence>
<evidence type="ECO:0000255" key="2">
    <source>
        <dbReference type="PROSITE-ProRule" id="PRU10027"/>
    </source>
</evidence>
<evidence type="ECO:0000256" key="3">
    <source>
        <dbReference type="SAM" id="MobiDB-lite"/>
    </source>
</evidence>
<evidence type="ECO:0000269" key="4">
    <source>
    </source>
</evidence>
<evidence type="ECO:0000305" key="5"/>
<sequence length="366" mass="41964">MRSVLSFEKLDSIGEGTYGIVSKGRDKETGRIVALKKVKIGQQDKDGIPLTSLREIQILKEIKHPNIVSLLEVVIGSTGDKIYLVFEYLEHDVASLIDNINKPFKLSEIKCFLLQLLRAVEYLHSHWIIHRDLKCSNLLYGNNGNLKLADFGLARKFGYPIESITPCMVTLWYRSPELLLGCQKYSTAVDLWSIGSIFGELLIGRPLITGNNEVDQIMRIFNLLGEPNEQIWPGFSSLPNFKRLNNIPHQPYNNLRELVPTISDTAFDLLNQLLTYDPTKRITASDAIKHPFFYENPFPQSIEMMPKFPTISKSFKNQNKKQNNNFNNFVQNNQTNQNNQTNQNNQTNQNNKTSQNNNMDSYKYSK</sequence>
<protein>
    <recommendedName>
        <fullName>Probable cyclin-dependent kinase 10</fullName>
        <ecNumber>2.7.11.22</ecNumber>
    </recommendedName>
</protein>
<gene>
    <name type="primary">cdk10</name>
    <name type="ORF">DDB_G0268480</name>
</gene>
<accession>Q55GS4</accession>
<reference key="1">
    <citation type="journal article" date="2005" name="Nature">
        <title>The genome of the social amoeba Dictyostelium discoideum.</title>
        <authorList>
            <person name="Eichinger L."/>
            <person name="Pachebat J.A."/>
            <person name="Gloeckner G."/>
            <person name="Rajandream M.A."/>
            <person name="Sucgang R."/>
            <person name="Berriman M."/>
            <person name="Song J."/>
            <person name="Olsen R."/>
            <person name="Szafranski K."/>
            <person name="Xu Q."/>
            <person name="Tunggal B."/>
            <person name="Kummerfeld S."/>
            <person name="Madera M."/>
            <person name="Konfortov B.A."/>
            <person name="Rivero F."/>
            <person name="Bankier A.T."/>
            <person name="Lehmann R."/>
            <person name="Hamlin N."/>
            <person name="Davies R."/>
            <person name="Gaudet P."/>
            <person name="Fey P."/>
            <person name="Pilcher K."/>
            <person name="Chen G."/>
            <person name="Saunders D."/>
            <person name="Sodergren E.J."/>
            <person name="Davis P."/>
            <person name="Kerhornou A."/>
            <person name="Nie X."/>
            <person name="Hall N."/>
            <person name="Anjard C."/>
            <person name="Hemphill L."/>
            <person name="Bason N."/>
            <person name="Farbrother P."/>
            <person name="Desany B."/>
            <person name="Just E."/>
            <person name="Morio T."/>
            <person name="Rost R."/>
            <person name="Churcher C.M."/>
            <person name="Cooper J."/>
            <person name="Haydock S."/>
            <person name="van Driessche N."/>
            <person name="Cronin A."/>
            <person name="Goodhead I."/>
            <person name="Muzny D.M."/>
            <person name="Mourier T."/>
            <person name="Pain A."/>
            <person name="Lu M."/>
            <person name="Harper D."/>
            <person name="Lindsay R."/>
            <person name="Hauser H."/>
            <person name="James K.D."/>
            <person name="Quiles M."/>
            <person name="Madan Babu M."/>
            <person name="Saito T."/>
            <person name="Buchrieser C."/>
            <person name="Wardroper A."/>
            <person name="Felder M."/>
            <person name="Thangavelu M."/>
            <person name="Johnson D."/>
            <person name="Knights A."/>
            <person name="Loulseged H."/>
            <person name="Mungall K.L."/>
            <person name="Oliver K."/>
            <person name="Price C."/>
            <person name="Quail M.A."/>
            <person name="Urushihara H."/>
            <person name="Hernandez J."/>
            <person name="Rabbinowitsch E."/>
            <person name="Steffen D."/>
            <person name="Sanders M."/>
            <person name="Ma J."/>
            <person name="Kohara Y."/>
            <person name="Sharp S."/>
            <person name="Simmonds M.N."/>
            <person name="Spiegler S."/>
            <person name="Tivey A."/>
            <person name="Sugano S."/>
            <person name="White B."/>
            <person name="Walker D."/>
            <person name="Woodward J.R."/>
            <person name="Winckler T."/>
            <person name="Tanaka Y."/>
            <person name="Shaulsky G."/>
            <person name="Schleicher M."/>
            <person name="Weinstock G.M."/>
            <person name="Rosenthal A."/>
            <person name="Cox E.C."/>
            <person name="Chisholm R.L."/>
            <person name="Gibbs R.A."/>
            <person name="Loomis W.F."/>
            <person name="Platzer M."/>
            <person name="Kay R.R."/>
            <person name="Williams J.G."/>
            <person name="Dear P.H."/>
            <person name="Noegel A.A."/>
            <person name="Barrell B.G."/>
            <person name="Kuspa A."/>
        </authorList>
    </citation>
    <scope>NUCLEOTIDE SEQUENCE [LARGE SCALE GENOMIC DNA]</scope>
    <source>
        <strain>AX4</strain>
    </source>
</reference>
<reference key="2">
    <citation type="journal article" date="2008" name="BMC Microbiol.">
        <title>Dictyostelium transcriptional responses to Pseudomonas aeruginosa: common and specific effects from PAO1 and PA14 strains.</title>
        <authorList>
            <person name="Carilla-Latorre S."/>
            <person name="Calvo-Garrido J."/>
            <person name="Bloomfield G."/>
            <person name="Skelton J."/>
            <person name="Kay R.R."/>
            <person name="Ivens A."/>
            <person name="Martinez J.L."/>
            <person name="Escalante R."/>
        </authorList>
    </citation>
    <scope>INDUCTION [LARGE SCALE ANALYSIS]</scope>
</reference>
<feature type="chain" id="PRO_0000353100" description="Probable cyclin-dependent kinase 10">
    <location>
        <begin position="1"/>
        <end position="366"/>
    </location>
</feature>
<feature type="domain" description="Protein kinase" evidence="1">
    <location>
        <begin position="7"/>
        <end position="293"/>
    </location>
</feature>
<feature type="region of interest" description="Disordered" evidence="3">
    <location>
        <begin position="315"/>
        <end position="366"/>
    </location>
</feature>
<feature type="compositionally biased region" description="Low complexity" evidence="3">
    <location>
        <begin position="315"/>
        <end position="358"/>
    </location>
</feature>
<feature type="active site" description="Proton acceptor" evidence="1 2">
    <location>
        <position position="132"/>
    </location>
</feature>
<feature type="binding site" evidence="1">
    <location>
        <begin position="13"/>
        <end position="21"/>
    </location>
    <ligand>
        <name>ATP</name>
        <dbReference type="ChEBI" id="CHEBI:30616"/>
    </ligand>
</feature>
<feature type="binding site" evidence="1">
    <location>
        <position position="36"/>
    </location>
    <ligand>
        <name>ATP</name>
        <dbReference type="ChEBI" id="CHEBI:30616"/>
    </ligand>
</feature>
<proteinExistence type="evidence at transcript level"/>
<comment type="catalytic activity">
    <reaction>
        <text>L-seryl-[protein] + ATP = O-phospho-L-seryl-[protein] + ADP + H(+)</text>
        <dbReference type="Rhea" id="RHEA:17989"/>
        <dbReference type="Rhea" id="RHEA-COMP:9863"/>
        <dbReference type="Rhea" id="RHEA-COMP:11604"/>
        <dbReference type="ChEBI" id="CHEBI:15378"/>
        <dbReference type="ChEBI" id="CHEBI:29999"/>
        <dbReference type="ChEBI" id="CHEBI:30616"/>
        <dbReference type="ChEBI" id="CHEBI:83421"/>
        <dbReference type="ChEBI" id="CHEBI:456216"/>
        <dbReference type="EC" id="2.7.11.22"/>
    </reaction>
</comment>
<comment type="catalytic activity">
    <reaction>
        <text>L-threonyl-[protein] + ATP = O-phospho-L-threonyl-[protein] + ADP + H(+)</text>
        <dbReference type="Rhea" id="RHEA:46608"/>
        <dbReference type="Rhea" id="RHEA-COMP:11060"/>
        <dbReference type="Rhea" id="RHEA-COMP:11605"/>
        <dbReference type="ChEBI" id="CHEBI:15378"/>
        <dbReference type="ChEBI" id="CHEBI:30013"/>
        <dbReference type="ChEBI" id="CHEBI:30616"/>
        <dbReference type="ChEBI" id="CHEBI:61977"/>
        <dbReference type="ChEBI" id="CHEBI:456216"/>
        <dbReference type="EC" id="2.7.11.22"/>
    </reaction>
</comment>
<comment type="induction">
    <text evidence="4">Up-regulated by Pseudomonas aeruginosa, PA14 strain infection but not by Pseudomonas aeruginosa, PA01 strain.</text>
</comment>
<comment type="similarity">
    <text evidence="5">Belongs to the protein kinase superfamily. CMGC Ser/Thr protein kinase family. CDC2/CDKX subfamily.</text>
</comment>